<accession>P37564</accession>
<accession>Q5EC36</accession>
<gene>
    <name type="primary">coaX</name>
    <name type="synonym">coaA</name>
    <name type="synonym">yacB</name>
    <name type="ordered locus">BSU00700</name>
</gene>
<feature type="chain" id="PRO_0000049448" description="Type III pantothenate kinase">
    <location>
        <begin position="1"/>
        <end position="258"/>
    </location>
</feature>
<feature type="active site" description="Proton acceptor" evidence="2">
    <location>
        <position position="109"/>
    </location>
</feature>
<feature type="binding site" evidence="1">
    <location>
        <begin position="6"/>
        <end position="13"/>
    </location>
    <ligand>
        <name>ATP</name>
        <dbReference type="ChEBI" id="CHEBI:30616"/>
    </ligand>
</feature>
<feature type="binding site" evidence="1">
    <location>
        <position position="100"/>
    </location>
    <ligand>
        <name>substrate</name>
    </ligand>
</feature>
<feature type="binding site" evidence="1">
    <location>
        <begin position="107"/>
        <end position="110"/>
    </location>
    <ligand>
        <name>substrate</name>
    </ligand>
</feature>
<feature type="binding site" evidence="2">
    <location>
        <position position="129"/>
    </location>
    <ligand>
        <name>K(+)</name>
        <dbReference type="ChEBI" id="CHEBI:29103"/>
    </ligand>
</feature>
<feature type="binding site" evidence="2">
    <location>
        <position position="132"/>
    </location>
    <ligand>
        <name>ATP</name>
        <dbReference type="ChEBI" id="CHEBI:30616"/>
    </ligand>
</feature>
<feature type="binding site" evidence="1">
    <location>
        <position position="184"/>
    </location>
    <ligand>
        <name>substrate</name>
    </ligand>
</feature>
<feature type="sequence conflict" description="In Ref. 1; AAW83041." evidence="5" ref="1">
    <original>EP</original>
    <variation>KQ</variation>
    <location>
        <begin position="214"/>
        <end position="215"/>
    </location>
</feature>
<protein>
    <recommendedName>
        <fullName>Type III pantothenate kinase</fullName>
        <ecNumber>2.7.1.33</ecNumber>
    </recommendedName>
    <alternativeName>
        <fullName>PanK-III</fullName>
    </alternativeName>
    <alternativeName>
        <fullName>Pantothenic acid kinase</fullName>
    </alternativeName>
</protein>
<dbReference type="EC" id="2.7.1.33"/>
<dbReference type="EMBL" id="AY912104">
    <property type="protein sequence ID" value="AAW83041.2"/>
    <property type="molecule type" value="Genomic_DNA"/>
</dbReference>
<dbReference type="EMBL" id="D26185">
    <property type="protein sequence ID" value="BAA05305.1"/>
    <property type="status" value="ALT_FRAME"/>
    <property type="molecule type" value="Genomic_DNA"/>
</dbReference>
<dbReference type="EMBL" id="AL009126">
    <property type="protein sequence ID" value="CAB11846.2"/>
    <property type="molecule type" value="Genomic_DNA"/>
</dbReference>
<dbReference type="PIR" id="S66100">
    <property type="entry name" value="S66100"/>
</dbReference>
<dbReference type="RefSeq" id="NP_387951.2">
    <property type="nucleotide sequence ID" value="NC_000964.3"/>
</dbReference>
<dbReference type="RefSeq" id="WP_010886388.1">
    <property type="nucleotide sequence ID" value="NZ_OZ025638.1"/>
</dbReference>
<dbReference type="SMR" id="P37564"/>
<dbReference type="FunCoup" id="P37564">
    <property type="interactions" value="653"/>
</dbReference>
<dbReference type="STRING" id="224308.BSU00700"/>
<dbReference type="jPOST" id="P37564"/>
<dbReference type="PaxDb" id="224308-BSU00700"/>
<dbReference type="EnsemblBacteria" id="CAB11846">
    <property type="protein sequence ID" value="CAB11846"/>
    <property type="gene ID" value="BSU_00700"/>
</dbReference>
<dbReference type="GeneID" id="936960"/>
<dbReference type="KEGG" id="bsu:BSU00700"/>
<dbReference type="PATRIC" id="fig|224308.179.peg.70"/>
<dbReference type="eggNOG" id="COG1521">
    <property type="taxonomic scope" value="Bacteria"/>
</dbReference>
<dbReference type="InParanoid" id="P37564"/>
<dbReference type="OrthoDB" id="9804707at2"/>
<dbReference type="PhylomeDB" id="P37564"/>
<dbReference type="BioCyc" id="BSUB:BSU00700-MONOMER"/>
<dbReference type="SABIO-RK" id="P37564"/>
<dbReference type="UniPathway" id="UPA00241">
    <property type="reaction ID" value="UER00352"/>
</dbReference>
<dbReference type="Proteomes" id="UP000001570">
    <property type="component" value="Chromosome"/>
</dbReference>
<dbReference type="GO" id="GO:0005737">
    <property type="term" value="C:cytoplasm"/>
    <property type="evidence" value="ECO:0007669"/>
    <property type="project" value="UniProtKB-SubCell"/>
</dbReference>
<dbReference type="GO" id="GO:0005524">
    <property type="term" value="F:ATP binding"/>
    <property type="evidence" value="ECO:0007669"/>
    <property type="project" value="UniProtKB-UniRule"/>
</dbReference>
<dbReference type="GO" id="GO:0046872">
    <property type="term" value="F:metal ion binding"/>
    <property type="evidence" value="ECO:0007669"/>
    <property type="project" value="UniProtKB-KW"/>
</dbReference>
<dbReference type="GO" id="GO:0004594">
    <property type="term" value="F:pantothenate kinase activity"/>
    <property type="evidence" value="ECO:0007669"/>
    <property type="project" value="UniProtKB-UniRule"/>
</dbReference>
<dbReference type="GO" id="GO:0015937">
    <property type="term" value="P:coenzyme A biosynthetic process"/>
    <property type="evidence" value="ECO:0007669"/>
    <property type="project" value="UniProtKB-UniRule"/>
</dbReference>
<dbReference type="CDD" id="cd24015">
    <property type="entry name" value="ASKHA_NBD_PanK-III"/>
    <property type="match status" value="1"/>
</dbReference>
<dbReference type="Gene3D" id="3.30.420.40">
    <property type="match status" value="2"/>
</dbReference>
<dbReference type="HAMAP" id="MF_01274">
    <property type="entry name" value="Pantothen_kinase_3"/>
    <property type="match status" value="1"/>
</dbReference>
<dbReference type="InterPro" id="IPR043129">
    <property type="entry name" value="ATPase_NBD"/>
</dbReference>
<dbReference type="InterPro" id="IPR004619">
    <property type="entry name" value="Type_III_PanK"/>
</dbReference>
<dbReference type="NCBIfam" id="TIGR00671">
    <property type="entry name" value="baf"/>
    <property type="match status" value="1"/>
</dbReference>
<dbReference type="NCBIfam" id="NF009843">
    <property type="entry name" value="PRK13318.1-1"/>
    <property type="match status" value="1"/>
</dbReference>
<dbReference type="NCBIfam" id="NF009847">
    <property type="entry name" value="PRK13318.1-5"/>
    <property type="match status" value="1"/>
</dbReference>
<dbReference type="NCBIfam" id="NF009848">
    <property type="entry name" value="PRK13318.1-6"/>
    <property type="match status" value="1"/>
</dbReference>
<dbReference type="NCBIfam" id="NF009855">
    <property type="entry name" value="PRK13321.1"/>
    <property type="match status" value="1"/>
</dbReference>
<dbReference type="PANTHER" id="PTHR34265">
    <property type="entry name" value="TYPE III PANTOTHENATE KINASE"/>
    <property type="match status" value="1"/>
</dbReference>
<dbReference type="PANTHER" id="PTHR34265:SF1">
    <property type="entry name" value="TYPE III PANTOTHENATE KINASE"/>
    <property type="match status" value="1"/>
</dbReference>
<dbReference type="Pfam" id="PF03309">
    <property type="entry name" value="Pan_kinase"/>
    <property type="match status" value="1"/>
</dbReference>
<dbReference type="SUPFAM" id="SSF53067">
    <property type="entry name" value="Actin-like ATPase domain"/>
    <property type="match status" value="2"/>
</dbReference>
<organism>
    <name type="scientific">Bacillus subtilis (strain 168)</name>
    <dbReference type="NCBI Taxonomy" id="224308"/>
    <lineage>
        <taxon>Bacteria</taxon>
        <taxon>Bacillati</taxon>
        <taxon>Bacillota</taxon>
        <taxon>Bacilli</taxon>
        <taxon>Bacillales</taxon>
        <taxon>Bacillaceae</taxon>
        <taxon>Bacillus</taxon>
    </lineage>
</organism>
<keyword id="KW-0067">ATP-binding</keyword>
<keyword id="KW-0173">Coenzyme A biosynthesis</keyword>
<keyword id="KW-0963">Cytoplasm</keyword>
<keyword id="KW-0418">Kinase</keyword>
<keyword id="KW-0479">Metal-binding</keyword>
<keyword id="KW-0547">Nucleotide-binding</keyword>
<keyword id="KW-0630">Potassium</keyword>
<keyword id="KW-1185">Reference proteome</keyword>
<keyword id="KW-0808">Transferase</keyword>
<reference key="1">
    <citation type="journal article" date="2005" name="J. Biol. Chem.">
        <title>Characterization of a new pantothenate kinase isoform from Helicobacter pylori.</title>
        <authorList>
            <person name="Brand L.A."/>
            <person name="Strauss E."/>
        </authorList>
    </citation>
    <scope>NUCLEOTIDE SEQUENCE [GENOMIC DNA]</scope>
    <scope>FUNCTION</scope>
    <scope>CHARACTERIZATION</scope>
    <scope>ACTIVITY REGULATION</scope>
    <scope>KINETIC PARAMETERS</scope>
    <source>
        <strain>168</strain>
    </source>
</reference>
<reference key="2">
    <citation type="journal article" date="1994" name="DNA Res.">
        <title>Systematic sequencing of the 180 kilobase region of the Bacillus subtilis chromosome containing the replication origin.</title>
        <authorList>
            <person name="Ogasawara N."/>
            <person name="Nakai S."/>
            <person name="Yoshikawa H."/>
        </authorList>
    </citation>
    <scope>NUCLEOTIDE SEQUENCE [GENOMIC DNA]</scope>
    <source>
        <strain>168</strain>
    </source>
</reference>
<reference key="3">
    <citation type="journal article" date="1997" name="Nature">
        <title>The complete genome sequence of the Gram-positive bacterium Bacillus subtilis.</title>
        <authorList>
            <person name="Kunst F."/>
            <person name="Ogasawara N."/>
            <person name="Moszer I."/>
            <person name="Albertini A.M."/>
            <person name="Alloni G."/>
            <person name="Azevedo V."/>
            <person name="Bertero M.G."/>
            <person name="Bessieres P."/>
            <person name="Bolotin A."/>
            <person name="Borchert S."/>
            <person name="Borriss R."/>
            <person name="Boursier L."/>
            <person name="Brans A."/>
            <person name="Braun M."/>
            <person name="Brignell S.C."/>
            <person name="Bron S."/>
            <person name="Brouillet S."/>
            <person name="Bruschi C.V."/>
            <person name="Caldwell B."/>
            <person name="Capuano V."/>
            <person name="Carter N.M."/>
            <person name="Choi S.-K."/>
            <person name="Codani J.-J."/>
            <person name="Connerton I.F."/>
            <person name="Cummings N.J."/>
            <person name="Daniel R.A."/>
            <person name="Denizot F."/>
            <person name="Devine K.M."/>
            <person name="Duesterhoeft A."/>
            <person name="Ehrlich S.D."/>
            <person name="Emmerson P.T."/>
            <person name="Entian K.-D."/>
            <person name="Errington J."/>
            <person name="Fabret C."/>
            <person name="Ferrari E."/>
            <person name="Foulger D."/>
            <person name="Fritz C."/>
            <person name="Fujita M."/>
            <person name="Fujita Y."/>
            <person name="Fuma S."/>
            <person name="Galizzi A."/>
            <person name="Galleron N."/>
            <person name="Ghim S.-Y."/>
            <person name="Glaser P."/>
            <person name="Goffeau A."/>
            <person name="Golightly E.J."/>
            <person name="Grandi G."/>
            <person name="Guiseppi G."/>
            <person name="Guy B.J."/>
            <person name="Haga K."/>
            <person name="Haiech J."/>
            <person name="Harwood C.R."/>
            <person name="Henaut A."/>
            <person name="Hilbert H."/>
            <person name="Holsappel S."/>
            <person name="Hosono S."/>
            <person name="Hullo M.-F."/>
            <person name="Itaya M."/>
            <person name="Jones L.-M."/>
            <person name="Joris B."/>
            <person name="Karamata D."/>
            <person name="Kasahara Y."/>
            <person name="Klaerr-Blanchard M."/>
            <person name="Klein C."/>
            <person name="Kobayashi Y."/>
            <person name="Koetter P."/>
            <person name="Koningstein G."/>
            <person name="Krogh S."/>
            <person name="Kumano M."/>
            <person name="Kurita K."/>
            <person name="Lapidus A."/>
            <person name="Lardinois S."/>
            <person name="Lauber J."/>
            <person name="Lazarevic V."/>
            <person name="Lee S.-M."/>
            <person name="Levine A."/>
            <person name="Liu H."/>
            <person name="Masuda S."/>
            <person name="Mauel C."/>
            <person name="Medigue C."/>
            <person name="Medina N."/>
            <person name="Mellado R.P."/>
            <person name="Mizuno M."/>
            <person name="Moestl D."/>
            <person name="Nakai S."/>
            <person name="Noback M."/>
            <person name="Noone D."/>
            <person name="O'Reilly M."/>
            <person name="Ogawa K."/>
            <person name="Ogiwara A."/>
            <person name="Oudega B."/>
            <person name="Park S.-H."/>
            <person name="Parro V."/>
            <person name="Pohl T.M."/>
            <person name="Portetelle D."/>
            <person name="Porwollik S."/>
            <person name="Prescott A.M."/>
            <person name="Presecan E."/>
            <person name="Pujic P."/>
            <person name="Purnelle B."/>
            <person name="Rapoport G."/>
            <person name="Rey M."/>
            <person name="Reynolds S."/>
            <person name="Rieger M."/>
            <person name="Rivolta C."/>
            <person name="Rocha E."/>
            <person name="Roche B."/>
            <person name="Rose M."/>
            <person name="Sadaie Y."/>
            <person name="Sato T."/>
            <person name="Scanlan E."/>
            <person name="Schleich S."/>
            <person name="Schroeter R."/>
            <person name="Scoffone F."/>
            <person name="Sekiguchi J."/>
            <person name="Sekowska A."/>
            <person name="Seror S.J."/>
            <person name="Serror P."/>
            <person name="Shin B.-S."/>
            <person name="Soldo B."/>
            <person name="Sorokin A."/>
            <person name="Tacconi E."/>
            <person name="Takagi T."/>
            <person name="Takahashi H."/>
            <person name="Takemaru K."/>
            <person name="Takeuchi M."/>
            <person name="Tamakoshi A."/>
            <person name="Tanaka T."/>
            <person name="Terpstra P."/>
            <person name="Tognoni A."/>
            <person name="Tosato V."/>
            <person name="Uchiyama S."/>
            <person name="Vandenbol M."/>
            <person name="Vannier F."/>
            <person name="Vassarotti A."/>
            <person name="Viari A."/>
            <person name="Wambutt R."/>
            <person name="Wedler E."/>
            <person name="Wedler H."/>
            <person name="Weitzenegger T."/>
            <person name="Winters P."/>
            <person name="Wipat A."/>
            <person name="Yamamoto H."/>
            <person name="Yamane K."/>
            <person name="Yasumoto K."/>
            <person name="Yata K."/>
            <person name="Yoshida K."/>
            <person name="Yoshikawa H.-F."/>
            <person name="Zumstein E."/>
            <person name="Yoshikawa H."/>
            <person name="Danchin A."/>
        </authorList>
    </citation>
    <scope>NUCLEOTIDE SEQUENCE [LARGE SCALE GENOMIC DNA]</scope>
    <source>
        <strain>168</strain>
    </source>
</reference>
<reference key="4">
    <citation type="journal article" date="2009" name="Microbiology">
        <title>From a consortium sequence to a unified sequence: the Bacillus subtilis 168 reference genome a decade later.</title>
        <authorList>
            <person name="Barbe V."/>
            <person name="Cruveiller S."/>
            <person name="Kunst F."/>
            <person name="Lenoble P."/>
            <person name="Meurice G."/>
            <person name="Sekowska A."/>
            <person name="Vallenet D."/>
            <person name="Wang T."/>
            <person name="Moszer I."/>
            <person name="Medigue C."/>
            <person name="Danchin A."/>
        </authorList>
    </citation>
    <scope>SEQUENCE REVISION TO C-TERMINUS</scope>
</reference>
<reference key="5">
    <citation type="journal article" date="2006" name="Structure">
        <title>Prokaryotic type II and type III pantothenate kinases: the same monomer fold creates dimers with distinct catalytic properties.</title>
        <authorList>
            <person name="Hong B.S."/>
            <person name="Yun M.K."/>
            <person name="Zhang Y.-M."/>
            <person name="Chohnan S."/>
            <person name="Rock C.O."/>
            <person name="White S.W."/>
            <person name="Jackowski S."/>
            <person name="Park H.-W."/>
            <person name="Leonardi R."/>
        </authorList>
    </citation>
    <scope>FUNCTION</scope>
    <scope>COFACTOR</scope>
    <source>
        <strain>168</strain>
    </source>
</reference>
<sequence length="258" mass="28576">MLLVIDVGNTNTVLGVYHDGKLEYHWRIETSRHKTEDEFGMILRSLFDHSGLMFEQIDGIIISSVVPPIMFALERMCTKYFHIEPQIVGPGMKTGLNIKYDNPKEVGADRIVNAVAAIHLYGNPLIVVDFGTATTYCYIDENKQYMGGAIAPGITISTEALYSRAAKLPRIEITRPDNIIGKNTVSAMQSGILFGYVGQVEGIVKRMKWQAKQEPKVIATGGLAPLIANESDCIDIVDPFLTLKGLELIYERNRVGSV</sequence>
<comment type="function">
    <text evidence="3 4">Catalyzes the phosphorylation of pantothenate (Pan), the first step in CoA biosynthesis. Cannot utilize a phosphoryl donor other than ATP.</text>
</comment>
<comment type="catalytic activity">
    <reaction>
        <text>(R)-pantothenate + ATP = (R)-4'-phosphopantothenate + ADP + H(+)</text>
        <dbReference type="Rhea" id="RHEA:16373"/>
        <dbReference type="ChEBI" id="CHEBI:10986"/>
        <dbReference type="ChEBI" id="CHEBI:15378"/>
        <dbReference type="ChEBI" id="CHEBI:29032"/>
        <dbReference type="ChEBI" id="CHEBI:30616"/>
        <dbReference type="ChEBI" id="CHEBI:456216"/>
        <dbReference type="EC" id="2.7.1.33"/>
    </reaction>
</comment>
<comment type="cofactor">
    <cofactor evidence="4">
        <name>NH4(+)</name>
        <dbReference type="ChEBI" id="CHEBI:28938"/>
    </cofactor>
    <cofactor evidence="4">
        <name>K(+)</name>
        <dbReference type="ChEBI" id="CHEBI:29103"/>
    </cofactor>
    <text evidence="4">Monovalent cations. Ammonium or potassium.</text>
</comment>
<comment type="activity regulation">
    <text evidence="3">Not regulated by feedback inhibition by CoA and its thioesters as described for many other pantothenate kinases. Not inhibited by N-pentylpantothenamide (N5-Pan), and this compound cannot act as a substrate either.</text>
</comment>
<comment type="biophysicochemical properties">
    <kinetics>
        <KM evidence="3">168 uM for pantothenate</KM>
        <KM evidence="3">3 mM for ATP</KM>
    </kinetics>
</comment>
<comment type="pathway">
    <text>Cofactor biosynthesis; coenzyme A biosynthesis; CoA from (R)-pantothenate: step 1/5.</text>
</comment>
<comment type="subunit">
    <text evidence="1">Homodimer.</text>
</comment>
<comment type="subcellular location">
    <subcellularLocation>
        <location evidence="1">Cytoplasm</location>
    </subcellularLocation>
</comment>
<comment type="similarity">
    <text evidence="5">Belongs to the type III pantothenate kinase family.</text>
</comment>
<comment type="sequence caution" evidence="5">
    <conflict type="frameshift">
        <sequence resource="EMBL-CDS" id="BAA05305"/>
    </conflict>
</comment>
<evidence type="ECO:0000250" key="1"/>
<evidence type="ECO:0000255" key="2"/>
<evidence type="ECO:0000269" key="3">
    <source>
    </source>
</evidence>
<evidence type="ECO:0000269" key="4">
    <source>
    </source>
</evidence>
<evidence type="ECO:0000305" key="5"/>
<name>COAX_BACSU</name>
<proteinExistence type="evidence at protein level"/>